<feature type="chain" id="PRO_1000142763" description="Large ribosomal subunit protein uL15">
    <location>
        <begin position="1"/>
        <end position="144"/>
    </location>
</feature>
<feature type="region of interest" description="Disordered" evidence="2">
    <location>
        <begin position="1"/>
        <end position="52"/>
    </location>
</feature>
<dbReference type="EMBL" id="CP001091">
    <property type="protein sequence ID" value="ACE62516.1"/>
    <property type="molecule type" value="Genomic_DNA"/>
</dbReference>
<dbReference type="RefSeq" id="WP_005618255.1">
    <property type="nucleotide sequence ID" value="NC_010939.1"/>
</dbReference>
<dbReference type="SMR" id="B3GZ30"/>
<dbReference type="KEGG" id="apa:APP7_1864"/>
<dbReference type="HOGENOM" id="CLU_055188_4_2_6"/>
<dbReference type="Proteomes" id="UP000001226">
    <property type="component" value="Chromosome"/>
</dbReference>
<dbReference type="GO" id="GO:0022625">
    <property type="term" value="C:cytosolic large ribosomal subunit"/>
    <property type="evidence" value="ECO:0007669"/>
    <property type="project" value="TreeGrafter"/>
</dbReference>
<dbReference type="GO" id="GO:0019843">
    <property type="term" value="F:rRNA binding"/>
    <property type="evidence" value="ECO:0007669"/>
    <property type="project" value="UniProtKB-UniRule"/>
</dbReference>
<dbReference type="GO" id="GO:0003735">
    <property type="term" value="F:structural constituent of ribosome"/>
    <property type="evidence" value="ECO:0007669"/>
    <property type="project" value="InterPro"/>
</dbReference>
<dbReference type="GO" id="GO:0006412">
    <property type="term" value="P:translation"/>
    <property type="evidence" value="ECO:0007669"/>
    <property type="project" value="UniProtKB-UniRule"/>
</dbReference>
<dbReference type="Gene3D" id="3.100.10.10">
    <property type="match status" value="1"/>
</dbReference>
<dbReference type="HAMAP" id="MF_01341">
    <property type="entry name" value="Ribosomal_uL15"/>
    <property type="match status" value="1"/>
</dbReference>
<dbReference type="InterPro" id="IPR030878">
    <property type="entry name" value="Ribosomal_uL15"/>
</dbReference>
<dbReference type="InterPro" id="IPR021131">
    <property type="entry name" value="Ribosomal_uL15/eL18"/>
</dbReference>
<dbReference type="InterPro" id="IPR036227">
    <property type="entry name" value="Ribosomal_uL15/eL18_sf"/>
</dbReference>
<dbReference type="InterPro" id="IPR005749">
    <property type="entry name" value="Ribosomal_uL15_bac-type"/>
</dbReference>
<dbReference type="InterPro" id="IPR001196">
    <property type="entry name" value="Ribosomal_uL15_CS"/>
</dbReference>
<dbReference type="NCBIfam" id="TIGR01071">
    <property type="entry name" value="rplO_bact"/>
    <property type="match status" value="1"/>
</dbReference>
<dbReference type="PANTHER" id="PTHR12934">
    <property type="entry name" value="50S RIBOSOMAL PROTEIN L15"/>
    <property type="match status" value="1"/>
</dbReference>
<dbReference type="PANTHER" id="PTHR12934:SF11">
    <property type="entry name" value="LARGE RIBOSOMAL SUBUNIT PROTEIN UL15M"/>
    <property type="match status" value="1"/>
</dbReference>
<dbReference type="Pfam" id="PF00828">
    <property type="entry name" value="Ribosomal_L27A"/>
    <property type="match status" value="1"/>
</dbReference>
<dbReference type="SUPFAM" id="SSF52080">
    <property type="entry name" value="Ribosomal proteins L15p and L18e"/>
    <property type="match status" value="1"/>
</dbReference>
<dbReference type="PROSITE" id="PS00475">
    <property type="entry name" value="RIBOSOMAL_L15"/>
    <property type="match status" value="1"/>
</dbReference>
<protein>
    <recommendedName>
        <fullName evidence="1">Large ribosomal subunit protein uL15</fullName>
    </recommendedName>
    <alternativeName>
        <fullName evidence="3">50S ribosomal protein L15</fullName>
    </alternativeName>
</protein>
<organism>
    <name type="scientific">Actinobacillus pleuropneumoniae serotype 7 (strain AP76)</name>
    <dbReference type="NCBI Taxonomy" id="537457"/>
    <lineage>
        <taxon>Bacteria</taxon>
        <taxon>Pseudomonadati</taxon>
        <taxon>Pseudomonadota</taxon>
        <taxon>Gammaproteobacteria</taxon>
        <taxon>Pasteurellales</taxon>
        <taxon>Pasteurellaceae</taxon>
        <taxon>Actinobacillus</taxon>
    </lineage>
</organism>
<reference key="1">
    <citation type="submission" date="2008-06" db="EMBL/GenBank/DDBJ databases">
        <title>Genome and proteome analysis of A. pleuropneumoniae serotype 7.</title>
        <authorList>
            <person name="Linke B."/>
            <person name="Buettner F."/>
            <person name="Martinez-Arias R."/>
            <person name="Goesmann A."/>
            <person name="Baltes N."/>
            <person name="Tegetmeyer H."/>
            <person name="Singh M."/>
            <person name="Gerlach G.F."/>
        </authorList>
    </citation>
    <scope>NUCLEOTIDE SEQUENCE [LARGE SCALE GENOMIC DNA]</scope>
    <source>
        <strain>AP76</strain>
    </source>
</reference>
<comment type="function">
    <text evidence="1">Binds to the 23S rRNA.</text>
</comment>
<comment type="subunit">
    <text evidence="1">Part of the 50S ribosomal subunit.</text>
</comment>
<comment type="similarity">
    <text evidence="1">Belongs to the universal ribosomal protein uL15 family.</text>
</comment>
<evidence type="ECO:0000255" key="1">
    <source>
        <dbReference type="HAMAP-Rule" id="MF_01341"/>
    </source>
</evidence>
<evidence type="ECO:0000256" key="2">
    <source>
        <dbReference type="SAM" id="MobiDB-lite"/>
    </source>
</evidence>
<evidence type="ECO:0000305" key="3"/>
<keyword id="KW-0687">Ribonucleoprotein</keyword>
<keyword id="KW-0689">Ribosomal protein</keyword>
<keyword id="KW-0694">RNA-binding</keyword>
<keyword id="KW-0699">rRNA-binding</keyword>
<proteinExistence type="inferred from homology"/>
<accession>B3GZ30</accession>
<sequence length="144" mass="15019">MRLNSLSPAEGAKHSAKRLGRGISSGLGKTGGRGHKGQKSRTGGGVRRGFEGGQMPLYRRLPKFGFTSLKSFHVAEIRLNDLAKVDGNEVTLESLKAANVITKDILSVKVILAGKIEKAVVVKGLGVTKGAKAAIEAAGGSIEE</sequence>
<name>RL15_ACTP7</name>
<gene>
    <name evidence="1" type="primary">rplO</name>
    <name type="ordered locus">APP7_1864</name>
</gene>